<organism>
    <name type="scientific">Bdellovibrio bacteriovorus (strain ATCC 15356 / DSM 50701 / NCIMB 9529 / HD100)</name>
    <dbReference type="NCBI Taxonomy" id="264462"/>
    <lineage>
        <taxon>Bacteria</taxon>
        <taxon>Pseudomonadati</taxon>
        <taxon>Bdellovibrionota</taxon>
        <taxon>Bdellovibrionia</taxon>
        <taxon>Bdellovibrionales</taxon>
        <taxon>Pseudobdellovibrionaceae</taxon>
        <taxon>Bdellovibrio</taxon>
    </lineage>
</organism>
<comment type="catalytic activity">
    <reaction evidence="1">
        <text>tRNA(Phe) + L-phenylalanine + ATP = L-phenylalanyl-tRNA(Phe) + AMP + diphosphate + H(+)</text>
        <dbReference type="Rhea" id="RHEA:19413"/>
        <dbReference type="Rhea" id="RHEA-COMP:9668"/>
        <dbReference type="Rhea" id="RHEA-COMP:9699"/>
        <dbReference type="ChEBI" id="CHEBI:15378"/>
        <dbReference type="ChEBI" id="CHEBI:30616"/>
        <dbReference type="ChEBI" id="CHEBI:33019"/>
        <dbReference type="ChEBI" id="CHEBI:58095"/>
        <dbReference type="ChEBI" id="CHEBI:78442"/>
        <dbReference type="ChEBI" id="CHEBI:78531"/>
        <dbReference type="ChEBI" id="CHEBI:456215"/>
        <dbReference type="EC" id="6.1.1.20"/>
    </reaction>
</comment>
<comment type="cofactor">
    <cofactor evidence="1">
        <name>Mg(2+)</name>
        <dbReference type="ChEBI" id="CHEBI:18420"/>
    </cofactor>
    <text evidence="1">Binds 2 magnesium ions per tetramer.</text>
</comment>
<comment type="subunit">
    <text evidence="1">Tetramer of two alpha and two beta subunits.</text>
</comment>
<comment type="subcellular location">
    <subcellularLocation>
        <location evidence="1">Cytoplasm</location>
    </subcellularLocation>
</comment>
<comment type="similarity">
    <text evidence="1">Belongs to the phenylalanyl-tRNA synthetase beta subunit family. Type 1 subfamily.</text>
</comment>
<protein>
    <recommendedName>
        <fullName evidence="1">Phenylalanine--tRNA ligase beta subunit</fullName>
        <ecNumber evidence="1">6.1.1.20</ecNumber>
    </recommendedName>
    <alternativeName>
        <fullName evidence="1">Phenylalanyl-tRNA synthetase beta subunit</fullName>
        <shortName evidence="1">PheRS</shortName>
    </alternativeName>
</protein>
<accession>Q6MMJ1</accession>
<name>SYFB_BDEBA</name>
<dbReference type="EC" id="6.1.1.20" evidence="1"/>
<dbReference type="EMBL" id="BX842650">
    <property type="protein sequence ID" value="CAE79513.1"/>
    <property type="molecule type" value="Genomic_DNA"/>
</dbReference>
<dbReference type="RefSeq" id="WP_011164115.1">
    <property type="nucleotide sequence ID" value="NC_005363.1"/>
</dbReference>
<dbReference type="SMR" id="Q6MMJ1"/>
<dbReference type="STRING" id="264462.Bd1638"/>
<dbReference type="GeneID" id="93012627"/>
<dbReference type="KEGG" id="bba:Bd1638"/>
<dbReference type="eggNOG" id="COG0072">
    <property type="taxonomic scope" value="Bacteria"/>
</dbReference>
<dbReference type="eggNOG" id="COG0073">
    <property type="taxonomic scope" value="Bacteria"/>
</dbReference>
<dbReference type="HOGENOM" id="CLU_016891_0_0_7"/>
<dbReference type="Proteomes" id="UP000008080">
    <property type="component" value="Chromosome"/>
</dbReference>
<dbReference type="GO" id="GO:0009328">
    <property type="term" value="C:phenylalanine-tRNA ligase complex"/>
    <property type="evidence" value="ECO:0007669"/>
    <property type="project" value="TreeGrafter"/>
</dbReference>
<dbReference type="GO" id="GO:0005524">
    <property type="term" value="F:ATP binding"/>
    <property type="evidence" value="ECO:0007669"/>
    <property type="project" value="UniProtKB-UniRule"/>
</dbReference>
<dbReference type="GO" id="GO:0000287">
    <property type="term" value="F:magnesium ion binding"/>
    <property type="evidence" value="ECO:0007669"/>
    <property type="project" value="UniProtKB-UniRule"/>
</dbReference>
<dbReference type="GO" id="GO:0004826">
    <property type="term" value="F:phenylalanine-tRNA ligase activity"/>
    <property type="evidence" value="ECO:0007669"/>
    <property type="project" value="UniProtKB-UniRule"/>
</dbReference>
<dbReference type="GO" id="GO:0000049">
    <property type="term" value="F:tRNA binding"/>
    <property type="evidence" value="ECO:0007669"/>
    <property type="project" value="UniProtKB-KW"/>
</dbReference>
<dbReference type="GO" id="GO:0006432">
    <property type="term" value="P:phenylalanyl-tRNA aminoacylation"/>
    <property type="evidence" value="ECO:0007669"/>
    <property type="project" value="UniProtKB-UniRule"/>
</dbReference>
<dbReference type="CDD" id="cd00769">
    <property type="entry name" value="PheRS_beta_core"/>
    <property type="match status" value="1"/>
</dbReference>
<dbReference type="CDD" id="cd02796">
    <property type="entry name" value="tRNA_bind_bactPheRS"/>
    <property type="match status" value="1"/>
</dbReference>
<dbReference type="FunFam" id="2.40.50.140:FF:000045">
    <property type="entry name" value="Phenylalanine--tRNA ligase beta subunit"/>
    <property type="match status" value="1"/>
</dbReference>
<dbReference type="FunFam" id="3.30.70.380:FF:000001">
    <property type="entry name" value="Phenylalanine--tRNA ligase beta subunit"/>
    <property type="match status" value="1"/>
</dbReference>
<dbReference type="FunFam" id="3.50.40.10:FF:000001">
    <property type="entry name" value="Phenylalanine--tRNA ligase beta subunit"/>
    <property type="match status" value="1"/>
</dbReference>
<dbReference type="Gene3D" id="3.30.56.10">
    <property type="match status" value="2"/>
</dbReference>
<dbReference type="Gene3D" id="3.30.930.10">
    <property type="entry name" value="Bira Bifunctional Protein, Domain 2"/>
    <property type="match status" value="1"/>
</dbReference>
<dbReference type="Gene3D" id="3.30.70.380">
    <property type="entry name" value="Ferrodoxin-fold anticodon-binding domain"/>
    <property type="match status" value="1"/>
</dbReference>
<dbReference type="Gene3D" id="2.40.50.140">
    <property type="entry name" value="Nucleic acid-binding proteins"/>
    <property type="match status" value="1"/>
</dbReference>
<dbReference type="Gene3D" id="3.50.40.10">
    <property type="entry name" value="Phenylalanyl-trna Synthetase, Chain B, domain 3"/>
    <property type="match status" value="1"/>
</dbReference>
<dbReference type="HAMAP" id="MF_00283">
    <property type="entry name" value="Phe_tRNA_synth_beta1"/>
    <property type="match status" value="1"/>
</dbReference>
<dbReference type="InterPro" id="IPR045864">
    <property type="entry name" value="aa-tRNA-synth_II/BPL/LPL"/>
</dbReference>
<dbReference type="InterPro" id="IPR005146">
    <property type="entry name" value="B3/B4_tRNA-bd"/>
</dbReference>
<dbReference type="InterPro" id="IPR009061">
    <property type="entry name" value="DNA-bd_dom_put_sf"/>
</dbReference>
<dbReference type="InterPro" id="IPR005121">
    <property type="entry name" value="Fdx_antiC-bd"/>
</dbReference>
<dbReference type="InterPro" id="IPR036690">
    <property type="entry name" value="Fdx_antiC-bd_sf"/>
</dbReference>
<dbReference type="InterPro" id="IPR012340">
    <property type="entry name" value="NA-bd_OB-fold"/>
</dbReference>
<dbReference type="InterPro" id="IPR045060">
    <property type="entry name" value="Phe-tRNA-ligase_IIc_bsu"/>
</dbReference>
<dbReference type="InterPro" id="IPR004532">
    <property type="entry name" value="Phe-tRNA-ligase_IIc_bsu_bact"/>
</dbReference>
<dbReference type="InterPro" id="IPR020825">
    <property type="entry name" value="Phe-tRNA_synthase-like_B3/B4"/>
</dbReference>
<dbReference type="InterPro" id="IPR041616">
    <property type="entry name" value="PheRS_beta_core"/>
</dbReference>
<dbReference type="InterPro" id="IPR002547">
    <property type="entry name" value="tRNA-bd_dom"/>
</dbReference>
<dbReference type="InterPro" id="IPR033714">
    <property type="entry name" value="tRNA_bind_bactPheRS"/>
</dbReference>
<dbReference type="InterPro" id="IPR005147">
    <property type="entry name" value="tRNA_synthase_B5-dom"/>
</dbReference>
<dbReference type="NCBIfam" id="TIGR00472">
    <property type="entry name" value="pheT_bact"/>
    <property type="match status" value="1"/>
</dbReference>
<dbReference type="NCBIfam" id="NF045760">
    <property type="entry name" value="YtpR"/>
    <property type="match status" value="1"/>
</dbReference>
<dbReference type="PANTHER" id="PTHR10947:SF0">
    <property type="entry name" value="PHENYLALANINE--TRNA LIGASE BETA SUBUNIT"/>
    <property type="match status" value="1"/>
</dbReference>
<dbReference type="PANTHER" id="PTHR10947">
    <property type="entry name" value="PHENYLALANYL-TRNA SYNTHETASE BETA CHAIN AND LEUCINE-RICH REPEAT-CONTAINING PROTEIN 47"/>
    <property type="match status" value="1"/>
</dbReference>
<dbReference type="Pfam" id="PF03483">
    <property type="entry name" value="B3_4"/>
    <property type="match status" value="1"/>
</dbReference>
<dbReference type="Pfam" id="PF03484">
    <property type="entry name" value="B5"/>
    <property type="match status" value="1"/>
</dbReference>
<dbReference type="Pfam" id="PF03147">
    <property type="entry name" value="FDX-ACB"/>
    <property type="match status" value="1"/>
</dbReference>
<dbReference type="Pfam" id="PF01588">
    <property type="entry name" value="tRNA_bind"/>
    <property type="match status" value="1"/>
</dbReference>
<dbReference type="Pfam" id="PF17759">
    <property type="entry name" value="tRNA_synthFbeta"/>
    <property type="match status" value="1"/>
</dbReference>
<dbReference type="SMART" id="SM00873">
    <property type="entry name" value="B3_4"/>
    <property type="match status" value="1"/>
</dbReference>
<dbReference type="SMART" id="SM00874">
    <property type="entry name" value="B5"/>
    <property type="match status" value="1"/>
</dbReference>
<dbReference type="SMART" id="SM00896">
    <property type="entry name" value="FDX-ACB"/>
    <property type="match status" value="1"/>
</dbReference>
<dbReference type="SUPFAM" id="SSF54991">
    <property type="entry name" value="Anticodon-binding domain of PheRS"/>
    <property type="match status" value="1"/>
</dbReference>
<dbReference type="SUPFAM" id="SSF55681">
    <property type="entry name" value="Class II aaRS and biotin synthetases"/>
    <property type="match status" value="1"/>
</dbReference>
<dbReference type="SUPFAM" id="SSF50249">
    <property type="entry name" value="Nucleic acid-binding proteins"/>
    <property type="match status" value="1"/>
</dbReference>
<dbReference type="SUPFAM" id="SSF56037">
    <property type="entry name" value="PheT/TilS domain"/>
    <property type="match status" value="1"/>
</dbReference>
<dbReference type="SUPFAM" id="SSF46955">
    <property type="entry name" value="Putative DNA-binding domain"/>
    <property type="match status" value="1"/>
</dbReference>
<dbReference type="PROSITE" id="PS51483">
    <property type="entry name" value="B5"/>
    <property type="match status" value="1"/>
</dbReference>
<dbReference type="PROSITE" id="PS51447">
    <property type="entry name" value="FDX_ACB"/>
    <property type="match status" value="1"/>
</dbReference>
<dbReference type="PROSITE" id="PS50886">
    <property type="entry name" value="TRBD"/>
    <property type="match status" value="1"/>
</dbReference>
<reference key="1">
    <citation type="journal article" date="2004" name="Science">
        <title>A predator unmasked: life cycle of Bdellovibrio bacteriovorus from a genomic perspective.</title>
        <authorList>
            <person name="Rendulic S."/>
            <person name="Jagtap P."/>
            <person name="Rosinus A."/>
            <person name="Eppinger M."/>
            <person name="Baar C."/>
            <person name="Lanz C."/>
            <person name="Keller H."/>
            <person name="Lambert C."/>
            <person name="Evans K.J."/>
            <person name="Goesmann A."/>
            <person name="Meyer F."/>
            <person name="Sockett R.E."/>
            <person name="Schuster S.C."/>
        </authorList>
    </citation>
    <scope>NUCLEOTIDE SEQUENCE [LARGE SCALE GENOMIC DNA]</scope>
    <source>
        <strain>ATCC 15356 / DSM 50701 / NCIMB 9529 / HD100</strain>
    </source>
</reference>
<keyword id="KW-0030">Aminoacyl-tRNA synthetase</keyword>
<keyword id="KW-0067">ATP-binding</keyword>
<keyword id="KW-0963">Cytoplasm</keyword>
<keyword id="KW-0436">Ligase</keyword>
<keyword id="KW-0460">Magnesium</keyword>
<keyword id="KW-0479">Metal-binding</keyword>
<keyword id="KW-0547">Nucleotide-binding</keyword>
<keyword id="KW-0648">Protein biosynthesis</keyword>
<keyword id="KW-1185">Reference proteome</keyword>
<keyword id="KW-0694">RNA-binding</keyword>
<keyword id="KW-0820">tRNA-binding</keyword>
<feature type="chain" id="PRO_0000126848" description="Phenylalanine--tRNA ligase beta subunit">
    <location>
        <begin position="1"/>
        <end position="813"/>
    </location>
</feature>
<feature type="domain" description="tRNA-binding" evidence="1">
    <location>
        <begin position="42"/>
        <end position="151"/>
    </location>
</feature>
<feature type="domain" description="B5" evidence="1">
    <location>
        <begin position="405"/>
        <end position="480"/>
    </location>
</feature>
<feature type="domain" description="FDX-ACB" evidence="1">
    <location>
        <begin position="720"/>
        <end position="813"/>
    </location>
</feature>
<feature type="binding site" evidence="1">
    <location>
        <position position="458"/>
    </location>
    <ligand>
        <name>Mg(2+)</name>
        <dbReference type="ChEBI" id="CHEBI:18420"/>
        <note>shared with alpha subunit</note>
    </ligand>
</feature>
<feature type="binding site" evidence="1">
    <location>
        <position position="464"/>
    </location>
    <ligand>
        <name>Mg(2+)</name>
        <dbReference type="ChEBI" id="CHEBI:18420"/>
        <note>shared with alpha subunit</note>
    </ligand>
</feature>
<feature type="binding site" evidence="1">
    <location>
        <position position="467"/>
    </location>
    <ligand>
        <name>Mg(2+)</name>
        <dbReference type="ChEBI" id="CHEBI:18420"/>
        <note>shared with alpha subunit</note>
    </ligand>
</feature>
<feature type="binding site" evidence="1">
    <location>
        <position position="468"/>
    </location>
    <ligand>
        <name>Mg(2+)</name>
        <dbReference type="ChEBI" id="CHEBI:18420"/>
        <note>shared with alpha subunit</note>
    </ligand>
</feature>
<gene>
    <name evidence="1" type="primary">pheT</name>
    <name type="ordered locus">Bd1638</name>
</gene>
<evidence type="ECO:0000255" key="1">
    <source>
        <dbReference type="HAMAP-Rule" id="MF_00283"/>
    </source>
</evidence>
<sequence length="813" mass="89251">MKISLKWLHDYVDVTEFFQKPEVLAEALTRGGLEVEEITNRAKDFNHVVIGHILEKDKHPNADKLSLCRVSTGEGVVHQIVCGAQNHKAGDRVIVALPGAVLPGNFAIKKSAVRGVDSAGMLCSLKELGLATESEGIAILPADAPVGKAYAEYGGYDDVTFELKVTANRADCLSHFGLAREVSTLFGKELKVPSSELKTNGKSSKSEIALDVKAFDLCPRYAGRFLKGVKVGPSPAWLKARLESVGMNSINNIVDVTNYVMLELGQPLHAFDAAFINGKKIIVDRAVAGEKFITLDGTEIALNGAELTIRDVNHPVCLAGVVGGKNSGVSDSTTEVFLEAAYFLPMSARKTSRSHGIDTDSSYRFARGVDPDGTLRGLNRAAALILEVAGGEAYADHHDFYPNPVKKAPVDITIKTVSDRLGYEAEEHKFVDFMKRLGCEINKKGETFTVLPPTFRFDIEQDMDLVEEYARLNGYEHIPEALPALAAAPSFQDKTFMLNRTTSELLRGEGFQQAVNFAFVGSKAQKAFLGSLEALKATGLAATEKEIRILNPLNEEMDVMRSSLSFGLFKNLNHNFHSGNMQGRLFEIGSTFFVKDDGSFAEGSRAGMAIWGRASNLWNKSLDYPVVYELKAAVEVLLKSLNISSYTWVTPANKSEVPEFLHQGQFAQLLVEGKKVGFIGTLHPLLLEDNKIRVPAALAELDLDQLYKGQPRPYRIQSVSKFPIVERDFAFVMPKALKVGDVLKDIRKAGAGLLLNVDVFDLYEGEKMEAGKKSVAIRIWLQDKNATLQETQINETTTKILESLKKNFDLSVR</sequence>
<proteinExistence type="inferred from homology"/>